<dbReference type="EC" id="2.7.7.18" evidence="1"/>
<dbReference type="EMBL" id="AL596168">
    <property type="protein sequence ID" value="CAC96754.1"/>
    <property type="molecule type" value="Genomic_DNA"/>
</dbReference>
<dbReference type="PIR" id="AB1623">
    <property type="entry name" value="AB1623"/>
</dbReference>
<dbReference type="RefSeq" id="WP_010991577.1">
    <property type="nucleotide sequence ID" value="NC_003212.1"/>
</dbReference>
<dbReference type="SMR" id="Q92BM5"/>
<dbReference type="STRING" id="272626.gene:17565854"/>
<dbReference type="GeneID" id="93234904"/>
<dbReference type="KEGG" id="lin:lin1523"/>
<dbReference type="eggNOG" id="COG1057">
    <property type="taxonomic scope" value="Bacteria"/>
</dbReference>
<dbReference type="HOGENOM" id="CLU_069765_3_1_9"/>
<dbReference type="OrthoDB" id="5295945at2"/>
<dbReference type="UniPathway" id="UPA00253">
    <property type="reaction ID" value="UER00332"/>
</dbReference>
<dbReference type="Proteomes" id="UP000002513">
    <property type="component" value="Chromosome"/>
</dbReference>
<dbReference type="GO" id="GO:0005524">
    <property type="term" value="F:ATP binding"/>
    <property type="evidence" value="ECO:0007669"/>
    <property type="project" value="UniProtKB-KW"/>
</dbReference>
<dbReference type="GO" id="GO:0004515">
    <property type="term" value="F:nicotinate-nucleotide adenylyltransferase activity"/>
    <property type="evidence" value="ECO:0007669"/>
    <property type="project" value="UniProtKB-UniRule"/>
</dbReference>
<dbReference type="GO" id="GO:0009435">
    <property type="term" value="P:NAD biosynthetic process"/>
    <property type="evidence" value="ECO:0007669"/>
    <property type="project" value="UniProtKB-UniRule"/>
</dbReference>
<dbReference type="CDD" id="cd02165">
    <property type="entry name" value="NMNAT"/>
    <property type="match status" value="1"/>
</dbReference>
<dbReference type="FunFam" id="3.40.50.620:FF:000079">
    <property type="entry name" value="Probable nicotinate-nucleotide adenylyltransferase"/>
    <property type="match status" value="1"/>
</dbReference>
<dbReference type="Gene3D" id="3.40.50.620">
    <property type="entry name" value="HUPs"/>
    <property type="match status" value="1"/>
</dbReference>
<dbReference type="HAMAP" id="MF_00244">
    <property type="entry name" value="NaMN_adenylyltr"/>
    <property type="match status" value="1"/>
</dbReference>
<dbReference type="InterPro" id="IPR004821">
    <property type="entry name" value="Cyt_trans-like"/>
</dbReference>
<dbReference type="InterPro" id="IPR005248">
    <property type="entry name" value="NadD/NMNAT"/>
</dbReference>
<dbReference type="InterPro" id="IPR014729">
    <property type="entry name" value="Rossmann-like_a/b/a_fold"/>
</dbReference>
<dbReference type="NCBIfam" id="TIGR00125">
    <property type="entry name" value="cyt_tran_rel"/>
    <property type="match status" value="1"/>
</dbReference>
<dbReference type="NCBIfam" id="TIGR00482">
    <property type="entry name" value="nicotinate (nicotinamide) nucleotide adenylyltransferase"/>
    <property type="match status" value="1"/>
</dbReference>
<dbReference type="NCBIfam" id="NF000840">
    <property type="entry name" value="PRK00071.1-3"/>
    <property type="match status" value="1"/>
</dbReference>
<dbReference type="NCBIfam" id="NF000841">
    <property type="entry name" value="PRK00071.1-4"/>
    <property type="match status" value="1"/>
</dbReference>
<dbReference type="PANTHER" id="PTHR39321">
    <property type="entry name" value="NICOTINATE-NUCLEOTIDE ADENYLYLTRANSFERASE-RELATED"/>
    <property type="match status" value="1"/>
</dbReference>
<dbReference type="PANTHER" id="PTHR39321:SF3">
    <property type="entry name" value="PHOSPHOPANTETHEINE ADENYLYLTRANSFERASE"/>
    <property type="match status" value="1"/>
</dbReference>
<dbReference type="Pfam" id="PF01467">
    <property type="entry name" value="CTP_transf_like"/>
    <property type="match status" value="1"/>
</dbReference>
<dbReference type="SUPFAM" id="SSF52374">
    <property type="entry name" value="Nucleotidylyl transferase"/>
    <property type="match status" value="1"/>
</dbReference>
<feature type="chain" id="PRO_0000181422" description="Probable nicotinate-nucleotide adenylyltransferase">
    <location>
        <begin position="1"/>
        <end position="188"/>
    </location>
</feature>
<reference key="1">
    <citation type="journal article" date="2001" name="Science">
        <title>Comparative genomics of Listeria species.</title>
        <authorList>
            <person name="Glaser P."/>
            <person name="Frangeul L."/>
            <person name="Buchrieser C."/>
            <person name="Rusniok C."/>
            <person name="Amend A."/>
            <person name="Baquero F."/>
            <person name="Berche P."/>
            <person name="Bloecker H."/>
            <person name="Brandt P."/>
            <person name="Chakraborty T."/>
            <person name="Charbit A."/>
            <person name="Chetouani F."/>
            <person name="Couve E."/>
            <person name="de Daruvar A."/>
            <person name="Dehoux P."/>
            <person name="Domann E."/>
            <person name="Dominguez-Bernal G."/>
            <person name="Duchaud E."/>
            <person name="Durant L."/>
            <person name="Dussurget O."/>
            <person name="Entian K.-D."/>
            <person name="Fsihi H."/>
            <person name="Garcia-del Portillo F."/>
            <person name="Garrido P."/>
            <person name="Gautier L."/>
            <person name="Goebel W."/>
            <person name="Gomez-Lopez N."/>
            <person name="Hain T."/>
            <person name="Hauf J."/>
            <person name="Jackson D."/>
            <person name="Jones L.-M."/>
            <person name="Kaerst U."/>
            <person name="Kreft J."/>
            <person name="Kuhn M."/>
            <person name="Kunst F."/>
            <person name="Kurapkat G."/>
            <person name="Madueno E."/>
            <person name="Maitournam A."/>
            <person name="Mata Vicente J."/>
            <person name="Ng E."/>
            <person name="Nedjari H."/>
            <person name="Nordsiek G."/>
            <person name="Novella S."/>
            <person name="de Pablos B."/>
            <person name="Perez-Diaz J.-C."/>
            <person name="Purcell R."/>
            <person name="Remmel B."/>
            <person name="Rose M."/>
            <person name="Schlueter T."/>
            <person name="Simoes N."/>
            <person name="Tierrez A."/>
            <person name="Vazquez-Boland J.-A."/>
            <person name="Voss H."/>
            <person name="Wehland J."/>
            <person name="Cossart P."/>
        </authorList>
    </citation>
    <scope>NUCLEOTIDE SEQUENCE [LARGE SCALE GENOMIC DNA]</scope>
    <source>
        <strain>ATCC BAA-680 / CLIP 11262</strain>
    </source>
</reference>
<evidence type="ECO:0000255" key="1">
    <source>
        <dbReference type="HAMAP-Rule" id="MF_00244"/>
    </source>
</evidence>
<proteinExistence type="inferred from homology"/>
<organism>
    <name type="scientific">Listeria innocua serovar 6a (strain ATCC BAA-680 / CLIP 11262)</name>
    <dbReference type="NCBI Taxonomy" id="272626"/>
    <lineage>
        <taxon>Bacteria</taxon>
        <taxon>Bacillati</taxon>
        <taxon>Bacillota</taxon>
        <taxon>Bacilli</taxon>
        <taxon>Bacillales</taxon>
        <taxon>Listeriaceae</taxon>
        <taxon>Listeria</taxon>
    </lineage>
</organism>
<protein>
    <recommendedName>
        <fullName evidence="1">Probable nicotinate-nucleotide adenylyltransferase</fullName>
        <ecNumber evidence="1">2.7.7.18</ecNumber>
    </recommendedName>
    <alternativeName>
        <fullName evidence="1">Deamido-NAD(+) diphosphorylase</fullName>
    </alternativeName>
    <alternativeName>
        <fullName evidence="1">Deamido-NAD(+) pyrophosphorylase</fullName>
    </alternativeName>
    <alternativeName>
        <fullName evidence="1">Nicotinate mononucleotide adenylyltransferase</fullName>
        <shortName evidence="1">NaMN adenylyltransferase</shortName>
    </alternativeName>
</protein>
<gene>
    <name evidence="1" type="primary">nadD</name>
    <name type="ordered locus">lin1523</name>
</gene>
<sequence length="188" mass="21903">MKHKVGILGGTFDPPHLAHLHMAEEAKAQLGLEKILFLPNKVPPHKQISGMASNEERVEMLQLMIEDRDSFEIDTRELMRTGKSYTYDTMRDMISEQPNTDFYFIIGGDMVEYLPKWYHIDDLVKMVTFVGVNRPLYQKEVPYDIVKINMPETAISSTEIRNDIEHAEAFLPEKVWSYIKEHQLYGKK</sequence>
<comment type="function">
    <text evidence="1">Catalyzes the reversible adenylation of nicotinate mononucleotide (NaMN) to nicotinic acid adenine dinucleotide (NaAD).</text>
</comment>
<comment type="catalytic activity">
    <reaction evidence="1">
        <text>nicotinate beta-D-ribonucleotide + ATP + H(+) = deamido-NAD(+) + diphosphate</text>
        <dbReference type="Rhea" id="RHEA:22860"/>
        <dbReference type="ChEBI" id="CHEBI:15378"/>
        <dbReference type="ChEBI" id="CHEBI:30616"/>
        <dbReference type="ChEBI" id="CHEBI:33019"/>
        <dbReference type="ChEBI" id="CHEBI:57502"/>
        <dbReference type="ChEBI" id="CHEBI:58437"/>
        <dbReference type="EC" id="2.7.7.18"/>
    </reaction>
</comment>
<comment type="pathway">
    <text evidence="1">Cofactor biosynthesis; NAD(+) biosynthesis; deamido-NAD(+) from nicotinate D-ribonucleotide: step 1/1.</text>
</comment>
<comment type="similarity">
    <text evidence="1">Belongs to the NadD family.</text>
</comment>
<keyword id="KW-0067">ATP-binding</keyword>
<keyword id="KW-0520">NAD</keyword>
<keyword id="KW-0547">Nucleotide-binding</keyword>
<keyword id="KW-0548">Nucleotidyltransferase</keyword>
<keyword id="KW-0662">Pyridine nucleotide biosynthesis</keyword>
<keyword id="KW-0808">Transferase</keyword>
<accession>Q92BM5</accession>
<name>NADD_LISIN</name>